<accession>P37909</accession>
<accession>P75751</accession>
<reference key="1">
    <citation type="journal article" date="1983" name="Biochemistry">
        <title>Complete sequence of the gltA gene encoding citrate synthase in Escherichia coli.</title>
        <authorList>
            <person name="Ner S.S."/>
            <person name="Bhayana V."/>
            <person name="Bell A.W."/>
            <person name="Giles I.G."/>
            <person name="Duckworth H.W."/>
            <person name="Bloxham D.P."/>
        </authorList>
    </citation>
    <scope>NUCLEOTIDE SEQUENCE [GENOMIC DNA]</scope>
    <source>
        <strain>K12</strain>
    </source>
</reference>
<reference key="2">
    <citation type="journal article" date="1996" name="DNA Res.">
        <title>A 718-kb DNA sequence of the Escherichia coli K-12 genome corresponding to the 12.7-28.0 min region on the linkage map.</title>
        <authorList>
            <person name="Oshima T."/>
            <person name="Aiba H."/>
            <person name="Baba T."/>
            <person name="Fujita K."/>
            <person name="Hayashi K."/>
            <person name="Honjo A."/>
            <person name="Ikemoto K."/>
            <person name="Inada T."/>
            <person name="Itoh T."/>
            <person name="Kajihara M."/>
            <person name="Kanai K."/>
            <person name="Kashimoto K."/>
            <person name="Kimura S."/>
            <person name="Kitagawa M."/>
            <person name="Makino K."/>
            <person name="Masuda S."/>
            <person name="Miki T."/>
            <person name="Mizobuchi K."/>
            <person name="Mori H."/>
            <person name="Motomura K."/>
            <person name="Nakamura Y."/>
            <person name="Nashimoto H."/>
            <person name="Nishio Y."/>
            <person name="Saito N."/>
            <person name="Sampei G."/>
            <person name="Seki Y."/>
            <person name="Tagami H."/>
            <person name="Takemoto K."/>
            <person name="Wada C."/>
            <person name="Yamamoto Y."/>
            <person name="Yano M."/>
            <person name="Horiuchi T."/>
        </authorList>
    </citation>
    <scope>NUCLEOTIDE SEQUENCE [LARGE SCALE GENOMIC DNA]</scope>
    <source>
        <strain>K12 / W3110 / ATCC 27325 / DSM 5911</strain>
    </source>
</reference>
<reference key="3">
    <citation type="journal article" date="1997" name="Science">
        <title>The complete genome sequence of Escherichia coli K-12.</title>
        <authorList>
            <person name="Blattner F.R."/>
            <person name="Plunkett G. III"/>
            <person name="Bloch C.A."/>
            <person name="Perna N.T."/>
            <person name="Burland V."/>
            <person name="Riley M."/>
            <person name="Collado-Vides J."/>
            <person name="Glasner J.D."/>
            <person name="Rode C.K."/>
            <person name="Mayhew G.F."/>
            <person name="Gregor J."/>
            <person name="Davis N.W."/>
            <person name="Kirkpatrick H.A."/>
            <person name="Goeden M.A."/>
            <person name="Rose D.J."/>
            <person name="Mau B."/>
            <person name="Shao Y."/>
        </authorList>
    </citation>
    <scope>NUCLEOTIDE SEQUENCE [LARGE SCALE GENOMIC DNA]</scope>
    <source>
        <strain>K12 / MG1655 / ATCC 47076</strain>
    </source>
</reference>
<reference key="4">
    <citation type="journal article" date="2006" name="Mol. Syst. Biol.">
        <title>Highly accurate genome sequences of Escherichia coli K-12 strains MG1655 and W3110.</title>
        <authorList>
            <person name="Hayashi K."/>
            <person name="Morooka N."/>
            <person name="Yamamoto Y."/>
            <person name="Fujita K."/>
            <person name="Isono K."/>
            <person name="Choi S."/>
            <person name="Ohtsubo E."/>
            <person name="Baba T."/>
            <person name="Wanner B.L."/>
            <person name="Mori H."/>
            <person name="Horiuchi T."/>
        </authorList>
    </citation>
    <scope>NUCLEOTIDE SEQUENCE [LARGE SCALE GENOMIC DNA]</scope>
    <source>
        <strain>K12 / W3110 / ATCC 27325 / DSM 5911</strain>
    </source>
</reference>
<reference key="5">
    <citation type="journal article" date="1994" name="Nucleic Acids Res.">
        <title>Intrinsic and extrinsic approaches for detecting genes in a bacterial genome.</title>
        <authorList>
            <person name="Borodovsky M."/>
            <person name="Rudd K.E."/>
            <person name="Koonin E.V."/>
        </authorList>
    </citation>
    <scope>IDENTIFICATION</scope>
</reference>
<name>YBGD_ECOLI</name>
<comment type="interaction">
    <interactant intactId="EBI-1119998">
        <id>P37909</id>
    </interactant>
    <interactant intactId="EBI-9152908">
        <id>P75680</id>
        <label>insO1</label>
    </interactant>
    <organismsDiffer>false</organismsDiffer>
    <experiments>2</experiments>
</comment>
<comment type="subcellular location">
    <subcellularLocation>
        <location evidence="2">Fimbrium</location>
    </subcellularLocation>
</comment>
<comment type="similarity">
    <text evidence="2">Belongs to the fimbrial protein family.</text>
</comment>
<comment type="sequence caution" evidence="2">
    <conflict type="frameshift">
        <sequence resource="EMBL" id="J01619"/>
    </conflict>
</comment>
<organism>
    <name type="scientific">Escherichia coli (strain K12)</name>
    <dbReference type="NCBI Taxonomy" id="83333"/>
    <lineage>
        <taxon>Bacteria</taxon>
        <taxon>Pseudomonadati</taxon>
        <taxon>Pseudomonadota</taxon>
        <taxon>Gammaproteobacteria</taxon>
        <taxon>Enterobacterales</taxon>
        <taxon>Enterobacteriaceae</taxon>
        <taxon>Escherichia</taxon>
    </lineage>
</organism>
<evidence type="ECO:0000255" key="1"/>
<evidence type="ECO:0000305" key="2"/>
<sequence>MFKGQKTLAALAVSLLFTAPVYAADEGSGEIHFKGEVIEAPCEIHPEDIDKNIDLGQVTTTHINREHHSNKVAVDIRLINCDLPASDNGSGMPVSKVGVTFDSTAKTTGATPLLSNTSAGEATGVGVRLMDKNDGNIVLGSAAPDLDLDASSSEQTLNFFAWMEQIDNAVDVTAGEVTANATYVLDYK</sequence>
<protein>
    <recommendedName>
        <fullName>Uncharacterized fimbrial-like protein YbgD</fullName>
    </recommendedName>
</protein>
<proteinExistence type="evidence at protein level"/>
<gene>
    <name type="primary">ybgD</name>
    <name type="ordered locus">b0719</name>
    <name type="ordered locus">JW0709</name>
</gene>
<feature type="signal peptide" evidence="1">
    <location>
        <begin position="1"/>
        <end position="23"/>
    </location>
</feature>
<feature type="chain" id="PRO_0000009255" description="Uncharacterized fimbrial-like protein YbgD">
    <location>
        <begin position="24"/>
        <end position="188"/>
    </location>
</feature>
<feature type="disulfide bond" evidence="1">
    <location>
        <begin position="42"/>
        <end position="81"/>
    </location>
</feature>
<dbReference type="EMBL" id="J01619">
    <property type="status" value="NOT_ANNOTATED_CDS"/>
    <property type="molecule type" value="Genomic_DNA"/>
</dbReference>
<dbReference type="EMBL" id="U00096">
    <property type="protein sequence ID" value="AAC73813.1"/>
    <property type="molecule type" value="Genomic_DNA"/>
</dbReference>
<dbReference type="EMBL" id="AP009048">
    <property type="protein sequence ID" value="BAA35383.1"/>
    <property type="molecule type" value="Genomic_DNA"/>
</dbReference>
<dbReference type="PIR" id="F64807">
    <property type="entry name" value="F64807"/>
</dbReference>
<dbReference type="RefSeq" id="NP_415247.1">
    <property type="nucleotide sequence ID" value="NC_000913.3"/>
</dbReference>
<dbReference type="RefSeq" id="WP_000472412.1">
    <property type="nucleotide sequence ID" value="NZ_SSZK01000033.1"/>
</dbReference>
<dbReference type="SMR" id="P37909"/>
<dbReference type="BioGRID" id="4259940">
    <property type="interactions" value="11"/>
</dbReference>
<dbReference type="BioGRID" id="849701">
    <property type="interactions" value="22"/>
</dbReference>
<dbReference type="FunCoup" id="P37909">
    <property type="interactions" value="107"/>
</dbReference>
<dbReference type="IntAct" id="P37909">
    <property type="interactions" value="26"/>
</dbReference>
<dbReference type="STRING" id="511145.b0719"/>
<dbReference type="PaxDb" id="511145-b0719"/>
<dbReference type="EnsemblBacteria" id="AAC73813">
    <property type="protein sequence ID" value="AAC73813"/>
    <property type="gene ID" value="b0719"/>
</dbReference>
<dbReference type="GeneID" id="945325"/>
<dbReference type="KEGG" id="ecj:JW0709"/>
<dbReference type="KEGG" id="eco:b0719"/>
<dbReference type="KEGG" id="ecoc:C3026_03595"/>
<dbReference type="PATRIC" id="fig|1411691.4.peg.1554"/>
<dbReference type="EchoBASE" id="EB2262"/>
<dbReference type="eggNOG" id="COG3539">
    <property type="taxonomic scope" value="Bacteria"/>
</dbReference>
<dbReference type="HOGENOM" id="CLU_088965_3_2_6"/>
<dbReference type="InParanoid" id="P37909"/>
<dbReference type="OMA" id="SLMSNTY"/>
<dbReference type="OrthoDB" id="6522787at2"/>
<dbReference type="PhylomeDB" id="P37909"/>
<dbReference type="BioCyc" id="EcoCyc:EG12359-MONOMER"/>
<dbReference type="PRO" id="PR:P37909"/>
<dbReference type="Proteomes" id="UP000000625">
    <property type="component" value="Chromosome"/>
</dbReference>
<dbReference type="GO" id="GO:0009289">
    <property type="term" value="C:pilus"/>
    <property type="evidence" value="ECO:0000318"/>
    <property type="project" value="GO_Central"/>
</dbReference>
<dbReference type="GO" id="GO:0043709">
    <property type="term" value="P:cell adhesion involved in single-species biofilm formation"/>
    <property type="evidence" value="ECO:0000318"/>
    <property type="project" value="GO_Central"/>
</dbReference>
<dbReference type="Gene3D" id="2.60.40.1090">
    <property type="entry name" value="Fimbrial-type adhesion domain"/>
    <property type="match status" value="1"/>
</dbReference>
<dbReference type="InterPro" id="IPR000259">
    <property type="entry name" value="Adhesion_dom_fimbrial"/>
</dbReference>
<dbReference type="InterPro" id="IPR036937">
    <property type="entry name" value="Adhesion_dom_fimbrial_sf"/>
</dbReference>
<dbReference type="InterPro" id="IPR008966">
    <property type="entry name" value="Adhesion_dom_sf"/>
</dbReference>
<dbReference type="InterPro" id="IPR050263">
    <property type="entry name" value="Bact_Fimbrial_Adh_Pro"/>
</dbReference>
<dbReference type="PANTHER" id="PTHR33420">
    <property type="entry name" value="FIMBRIAL SUBUNIT ELFA-RELATED"/>
    <property type="match status" value="1"/>
</dbReference>
<dbReference type="PANTHER" id="PTHR33420:SF11">
    <property type="entry name" value="FIMBRIAL-LIKE PROTEIN"/>
    <property type="match status" value="1"/>
</dbReference>
<dbReference type="Pfam" id="PF00419">
    <property type="entry name" value="Fimbrial"/>
    <property type="match status" value="1"/>
</dbReference>
<dbReference type="SUPFAM" id="SSF49401">
    <property type="entry name" value="Bacterial adhesins"/>
    <property type="match status" value="1"/>
</dbReference>
<keyword id="KW-1015">Disulfide bond</keyword>
<keyword id="KW-0281">Fimbrium</keyword>
<keyword id="KW-1185">Reference proteome</keyword>
<keyword id="KW-0732">Signal</keyword>